<dbReference type="EC" id="4.2.1.33" evidence="1"/>
<dbReference type="EMBL" id="CP000308">
    <property type="protein sequence ID" value="ABG15528.1"/>
    <property type="molecule type" value="Genomic_DNA"/>
</dbReference>
<dbReference type="RefSeq" id="WP_002210455.1">
    <property type="nucleotide sequence ID" value="NZ_CP009906.1"/>
</dbReference>
<dbReference type="SMR" id="Q1C1Z4"/>
<dbReference type="GeneID" id="57974081"/>
<dbReference type="KEGG" id="ypa:YPA_3566"/>
<dbReference type="UniPathway" id="UPA00048">
    <property type="reaction ID" value="UER00071"/>
</dbReference>
<dbReference type="Proteomes" id="UP000001971">
    <property type="component" value="Chromosome"/>
</dbReference>
<dbReference type="GO" id="GO:0003861">
    <property type="term" value="F:3-isopropylmalate dehydratase activity"/>
    <property type="evidence" value="ECO:0007669"/>
    <property type="project" value="UniProtKB-UniRule"/>
</dbReference>
<dbReference type="GO" id="GO:0051539">
    <property type="term" value="F:4 iron, 4 sulfur cluster binding"/>
    <property type="evidence" value="ECO:0007669"/>
    <property type="project" value="UniProtKB-KW"/>
</dbReference>
<dbReference type="GO" id="GO:0046872">
    <property type="term" value="F:metal ion binding"/>
    <property type="evidence" value="ECO:0007669"/>
    <property type="project" value="UniProtKB-KW"/>
</dbReference>
<dbReference type="GO" id="GO:0009098">
    <property type="term" value="P:L-leucine biosynthetic process"/>
    <property type="evidence" value="ECO:0007669"/>
    <property type="project" value="UniProtKB-UniRule"/>
</dbReference>
<dbReference type="CDD" id="cd01583">
    <property type="entry name" value="IPMI"/>
    <property type="match status" value="1"/>
</dbReference>
<dbReference type="FunFam" id="3.30.499.10:FF:000006">
    <property type="entry name" value="3-isopropylmalate dehydratase large subunit"/>
    <property type="match status" value="1"/>
</dbReference>
<dbReference type="FunFam" id="3.30.499.10:FF:000007">
    <property type="entry name" value="3-isopropylmalate dehydratase large subunit"/>
    <property type="match status" value="1"/>
</dbReference>
<dbReference type="Gene3D" id="3.30.499.10">
    <property type="entry name" value="Aconitase, domain 3"/>
    <property type="match status" value="2"/>
</dbReference>
<dbReference type="HAMAP" id="MF_01026">
    <property type="entry name" value="LeuC_type1"/>
    <property type="match status" value="1"/>
</dbReference>
<dbReference type="InterPro" id="IPR004430">
    <property type="entry name" value="3-IsopropMal_deHydase_lsu"/>
</dbReference>
<dbReference type="InterPro" id="IPR015931">
    <property type="entry name" value="Acnase/IPM_dHydase_lsu_aba_1/3"/>
</dbReference>
<dbReference type="InterPro" id="IPR001030">
    <property type="entry name" value="Acoase/IPM_deHydtase_lsu_aba"/>
</dbReference>
<dbReference type="InterPro" id="IPR018136">
    <property type="entry name" value="Aconitase_4Fe-4S_BS"/>
</dbReference>
<dbReference type="InterPro" id="IPR036008">
    <property type="entry name" value="Aconitase_4Fe-4S_dom"/>
</dbReference>
<dbReference type="InterPro" id="IPR050067">
    <property type="entry name" value="IPM_dehydratase_rel_enz"/>
</dbReference>
<dbReference type="InterPro" id="IPR033941">
    <property type="entry name" value="IPMI_cat"/>
</dbReference>
<dbReference type="NCBIfam" id="TIGR00170">
    <property type="entry name" value="leuC"/>
    <property type="match status" value="1"/>
</dbReference>
<dbReference type="NCBIfam" id="NF004016">
    <property type="entry name" value="PRK05478.1"/>
    <property type="match status" value="1"/>
</dbReference>
<dbReference type="NCBIfam" id="NF009116">
    <property type="entry name" value="PRK12466.1"/>
    <property type="match status" value="1"/>
</dbReference>
<dbReference type="PANTHER" id="PTHR43822:SF9">
    <property type="entry name" value="3-ISOPROPYLMALATE DEHYDRATASE"/>
    <property type="match status" value="1"/>
</dbReference>
<dbReference type="PANTHER" id="PTHR43822">
    <property type="entry name" value="HOMOACONITASE, MITOCHONDRIAL-RELATED"/>
    <property type="match status" value="1"/>
</dbReference>
<dbReference type="Pfam" id="PF00330">
    <property type="entry name" value="Aconitase"/>
    <property type="match status" value="1"/>
</dbReference>
<dbReference type="PRINTS" id="PR00415">
    <property type="entry name" value="ACONITASE"/>
</dbReference>
<dbReference type="SUPFAM" id="SSF53732">
    <property type="entry name" value="Aconitase iron-sulfur domain"/>
    <property type="match status" value="1"/>
</dbReference>
<dbReference type="PROSITE" id="PS00450">
    <property type="entry name" value="ACONITASE_1"/>
    <property type="match status" value="1"/>
</dbReference>
<dbReference type="PROSITE" id="PS01244">
    <property type="entry name" value="ACONITASE_2"/>
    <property type="match status" value="1"/>
</dbReference>
<evidence type="ECO:0000255" key="1">
    <source>
        <dbReference type="HAMAP-Rule" id="MF_01026"/>
    </source>
</evidence>
<accession>Q1C1Z4</accession>
<organism>
    <name type="scientific">Yersinia pestis bv. Antiqua (strain Antiqua)</name>
    <dbReference type="NCBI Taxonomy" id="360102"/>
    <lineage>
        <taxon>Bacteria</taxon>
        <taxon>Pseudomonadati</taxon>
        <taxon>Pseudomonadota</taxon>
        <taxon>Gammaproteobacteria</taxon>
        <taxon>Enterobacterales</taxon>
        <taxon>Yersiniaceae</taxon>
        <taxon>Yersinia</taxon>
    </lineage>
</organism>
<comment type="function">
    <text evidence="1">Catalyzes the isomerization between 2-isopropylmalate and 3-isopropylmalate, via the formation of 2-isopropylmaleate.</text>
</comment>
<comment type="catalytic activity">
    <reaction evidence="1">
        <text>(2R,3S)-3-isopropylmalate = (2S)-2-isopropylmalate</text>
        <dbReference type="Rhea" id="RHEA:32287"/>
        <dbReference type="ChEBI" id="CHEBI:1178"/>
        <dbReference type="ChEBI" id="CHEBI:35121"/>
        <dbReference type="EC" id="4.2.1.33"/>
    </reaction>
</comment>
<comment type="cofactor">
    <cofactor evidence="1">
        <name>[4Fe-4S] cluster</name>
        <dbReference type="ChEBI" id="CHEBI:49883"/>
    </cofactor>
    <text evidence="1">Binds 1 [4Fe-4S] cluster per subunit.</text>
</comment>
<comment type="pathway">
    <text evidence="1">Amino-acid biosynthesis; L-leucine biosynthesis; L-leucine from 3-methyl-2-oxobutanoate: step 2/4.</text>
</comment>
<comment type="subunit">
    <text evidence="1">Heterodimer of LeuC and LeuD.</text>
</comment>
<comment type="similarity">
    <text evidence="1">Belongs to the aconitase/IPM isomerase family. LeuC type 1 subfamily.</text>
</comment>
<sequence length="476" mass="50589">MGTTSSQSKTLYQKLYDAHIVHEAPNETPLLYIDRHLVHEVTSPQAFDGLRAMGRPVRQPGKTFATMDHNVSTQTKDINASGEMARIQMQELIKNCAEFGVSLYDLNHPFQGIVHVIGPEQGMTLPGMTIVCGDSHTATHGAFGSLAFGIGTSEVEHVLATQTLKQGRAKTMRIEVNGTVGAGITAKDIVLAIIGKTGSAGGTGHVVEFCGSAIEALSMEGRMTLCNMAIEMGAKAGLVAPDDTTFAYLKGRQFAPTGEQWEQGVAYWRTLKSDADAQFDTIVTLDAADIAPQVTWGTNPGQVIAVNQIIPAPESFSDPVERASAEKALAYMDLRPGIKLTEVAIDKVFIGSCTNSRIEDLRAAAAIAQGRKVAKGVQAIVVPGSGPVKAQAEAEGLDKIFIAAGFEWRLPGCSMCLAMNNDRLEPGERCASTSNRNFEGRQGRGGRTHLVSPAMAAAAAVSGHFADVRELSATTH</sequence>
<name>LEUC_YERPA</name>
<proteinExistence type="inferred from homology"/>
<gene>
    <name evidence="1" type="primary">leuC</name>
    <name type="ordered locus">YPA_3566</name>
</gene>
<feature type="chain" id="PRO_1000063635" description="3-isopropylmalate dehydratase large subunit">
    <location>
        <begin position="1"/>
        <end position="476"/>
    </location>
</feature>
<feature type="binding site" evidence="1">
    <location>
        <position position="353"/>
    </location>
    <ligand>
        <name>[4Fe-4S] cluster</name>
        <dbReference type="ChEBI" id="CHEBI:49883"/>
    </ligand>
</feature>
<feature type="binding site" evidence="1">
    <location>
        <position position="413"/>
    </location>
    <ligand>
        <name>[4Fe-4S] cluster</name>
        <dbReference type="ChEBI" id="CHEBI:49883"/>
    </ligand>
</feature>
<feature type="binding site" evidence="1">
    <location>
        <position position="416"/>
    </location>
    <ligand>
        <name>[4Fe-4S] cluster</name>
        <dbReference type="ChEBI" id="CHEBI:49883"/>
    </ligand>
</feature>
<keyword id="KW-0004">4Fe-4S</keyword>
<keyword id="KW-0028">Amino-acid biosynthesis</keyword>
<keyword id="KW-0100">Branched-chain amino acid biosynthesis</keyword>
<keyword id="KW-0408">Iron</keyword>
<keyword id="KW-0411">Iron-sulfur</keyword>
<keyword id="KW-0432">Leucine biosynthesis</keyword>
<keyword id="KW-0456">Lyase</keyword>
<keyword id="KW-0479">Metal-binding</keyword>
<reference key="1">
    <citation type="journal article" date="2006" name="J. Bacteriol.">
        <title>Complete genome sequence of Yersinia pestis strains Antiqua and Nepal516: evidence of gene reduction in an emerging pathogen.</title>
        <authorList>
            <person name="Chain P.S.G."/>
            <person name="Hu P."/>
            <person name="Malfatti S.A."/>
            <person name="Radnedge L."/>
            <person name="Larimer F."/>
            <person name="Vergez L.M."/>
            <person name="Worsham P."/>
            <person name="Chu M.C."/>
            <person name="Andersen G.L."/>
        </authorList>
    </citation>
    <scope>NUCLEOTIDE SEQUENCE [LARGE SCALE GENOMIC DNA]</scope>
    <source>
        <strain>Antiqua</strain>
    </source>
</reference>
<protein>
    <recommendedName>
        <fullName evidence="1">3-isopropylmalate dehydratase large subunit</fullName>
        <ecNumber evidence="1">4.2.1.33</ecNumber>
    </recommendedName>
    <alternativeName>
        <fullName evidence="1">Alpha-IPM isomerase</fullName>
        <shortName evidence="1">IPMI</shortName>
    </alternativeName>
    <alternativeName>
        <fullName evidence="1">Isopropylmalate isomerase</fullName>
    </alternativeName>
</protein>